<organism>
    <name type="scientific">Clostridium acetobutylicum (strain ATCC 824 / DSM 792 / JCM 1419 / IAM 19013 / LMG 5710 / NBRC 13948 / NRRL B-527 / VKM B-1787 / 2291 / W)</name>
    <dbReference type="NCBI Taxonomy" id="272562"/>
    <lineage>
        <taxon>Bacteria</taxon>
        <taxon>Bacillati</taxon>
        <taxon>Bacillota</taxon>
        <taxon>Clostridia</taxon>
        <taxon>Eubacteriales</taxon>
        <taxon>Clostridiaceae</taxon>
        <taxon>Clostridium</taxon>
    </lineage>
</organism>
<proteinExistence type="inferred from homology"/>
<reference key="1">
    <citation type="journal article" date="2001" name="J. Bacteriol.">
        <title>Genome sequence and comparative analysis of the solvent-producing bacterium Clostridium acetobutylicum.</title>
        <authorList>
            <person name="Noelling J."/>
            <person name="Breton G."/>
            <person name="Omelchenko M.V."/>
            <person name="Makarova K.S."/>
            <person name="Zeng Q."/>
            <person name="Gibson R."/>
            <person name="Lee H.M."/>
            <person name="Dubois J."/>
            <person name="Qiu D."/>
            <person name="Hitti J."/>
            <person name="Wolf Y.I."/>
            <person name="Tatusov R.L."/>
            <person name="Sabathe F."/>
            <person name="Doucette-Stamm L.A."/>
            <person name="Soucaille P."/>
            <person name="Daly M.J."/>
            <person name="Bennett G.N."/>
            <person name="Koonin E.V."/>
            <person name="Smith D.R."/>
        </authorList>
    </citation>
    <scope>NUCLEOTIDE SEQUENCE [LARGE SCALE GENOMIC DNA]</scope>
    <source>
        <strain>ATCC 824 / DSM 792 / JCM 1419 / IAM 19013 / LMG 5710 / NBRC 13948 / NRRL B-527 / VKM B-1787 / 2291 / W</strain>
    </source>
</reference>
<protein>
    <recommendedName>
        <fullName evidence="1">Acyl carrier protein</fullName>
        <shortName evidence="1">ACP</shortName>
    </recommendedName>
</protein>
<keyword id="KW-0963">Cytoplasm</keyword>
<keyword id="KW-0275">Fatty acid biosynthesis</keyword>
<keyword id="KW-0276">Fatty acid metabolism</keyword>
<keyword id="KW-0444">Lipid biosynthesis</keyword>
<keyword id="KW-0443">Lipid metabolism</keyword>
<keyword id="KW-0596">Phosphopantetheine</keyword>
<keyword id="KW-0597">Phosphoprotein</keyword>
<keyword id="KW-1185">Reference proteome</keyword>
<sequence length="77" mass="8608">MVFEKVKDIIADQLGIDATEIKMESSFIDDLGADSLDIVELIMALEEEFDIEMPDEEAEKVSSVGDVVNYIKAHTEE</sequence>
<comment type="function">
    <text evidence="1">Carrier of the growing fatty acid chain in fatty acid biosynthesis.</text>
</comment>
<comment type="pathway">
    <text evidence="1">Lipid metabolism; fatty acid biosynthesis.</text>
</comment>
<comment type="subcellular location">
    <subcellularLocation>
        <location evidence="1">Cytoplasm</location>
    </subcellularLocation>
</comment>
<comment type="PTM">
    <text evidence="1">4'-phosphopantetheine is transferred from CoA to a specific serine of apo-ACP by AcpS. This modification is essential for activity because fatty acids are bound in thioester linkage to the sulfhydryl of the prosthetic group.</text>
</comment>
<comment type="similarity">
    <text evidence="1">Belongs to the acyl carrier protein (ACP) family.</text>
</comment>
<evidence type="ECO:0000255" key="1">
    <source>
        <dbReference type="HAMAP-Rule" id="MF_01217"/>
    </source>
</evidence>
<evidence type="ECO:0000255" key="2">
    <source>
        <dbReference type="PROSITE-ProRule" id="PRU00258"/>
    </source>
</evidence>
<name>ACP_CLOAB</name>
<accession>Q97IA5</accession>
<gene>
    <name evidence="1" type="primary">acpP</name>
    <name type="ordered locus">CA_C1747</name>
</gene>
<feature type="chain" id="PRO_0000180130" description="Acyl carrier protein">
    <location>
        <begin position="1"/>
        <end position="77"/>
    </location>
</feature>
<feature type="domain" description="Carrier" evidence="2">
    <location>
        <begin position="1"/>
        <end position="75"/>
    </location>
</feature>
<feature type="modified residue" description="O-(pantetheine 4'-phosphoryl)serine" evidence="2">
    <location>
        <position position="35"/>
    </location>
</feature>
<dbReference type="EMBL" id="AE001437">
    <property type="protein sequence ID" value="AAK79713.1"/>
    <property type="molecule type" value="Genomic_DNA"/>
</dbReference>
<dbReference type="PIR" id="F97115">
    <property type="entry name" value="F97115"/>
</dbReference>
<dbReference type="RefSeq" id="NP_348373.1">
    <property type="nucleotide sequence ID" value="NC_003030.1"/>
</dbReference>
<dbReference type="RefSeq" id="WP_010965054.1">
    <property type="nucleotide sequence ID" value="NC_003030.1"/>
</dbReference>
<dbReference type="SMR" id="Q97IA5"/>
<dbReference type="STRING" id="272562.CA_C1747"/>
<dbReference type="GeneID" id="44998242"/>
<dbReference type="KEGG" id="cac:CA_C1747"/>
<dbReference type="PATRIC" id="fig|272562.8.peg.1950"/>
<dbReference type="eggNOG" id="COG0236">
    <property type="taxonomic scope" value="Bacteria"/>
</dbReference>
<dbReference type="HOGENOM" id="CLU_108696_5_1_9"/>
<dbReference type="OrthoDB" id="9804551at2"/>
<dbReference type="UniPathway" id="UPA00094"/>
<dbReference type="Proteomes" id="UP000000814">
    <property type="component" value="Chromosome"/>
</dbReference>
<dbReference type="GO" id="GO:0005829">
    <property type="term" value="C:cytosol"/>
    <property type="evidence" value="ECO:0007669"/>
    <property type="project" value="TreeGrafter"/>
</dbReference>
<dbReference type="GO" id="GO:0016020">
    <property type="term" value="C:membrane"/>
    <property type="evidence" value="ECO:0007669"/>
    <property type="project" value="GOC"/>
</dbReference>
<dbReference type="GO" id="GO:0000035">
    <property type="term" value="F:acyl binding"/>
    <property type="evidence" value="ECO:0007669"/>
    <property type="project" value="TreeGrafter"/>
</dbReference>
<dbReference type="GO" id="GO:0000036">
    <property type="term" value="F:acyl carrier activity"/>
    <property type="evidence" value="ECO:0007669"/>
    <property type="project" value="UniProtKB-UniRule"/>
</dbReference>
<dbReference type="GO" id="GO:0009245">
    <property type="term" value="P:lipid A biosynthetic process"/>
    <property type="evidence" value="ECO:0007669"/>
    <property type="project" value="TreeGrafter"/>
</dbReference>
<dbReference type="FunFam" id="1.10.1200.10:FF:000006">
    <property type="entry name" value="Acyl carrier protein"/>
    <property type="match status" value="1"/>
</dbReference>
<dbReference type="Gene3D" id="1.10.1200.10">
    <property type="entry name" value="ACP-like"/>
    <property type="match status" value="1"/>
</dbReference>
<dbReference type="HAMAP" id="MF_01217">
    <property type="entry name" value="Acyl_carrier"/>
    <property type="match status" value="1"/>
</dbReference>
<dbReference type="InterPro" id="IPR003231">
    <property type="entry name" value="ACP"/>
</dbReference>
<dbReference type="InterPro" id="IPR036736">
    <property type="entry name" value="ACP-like_sf"/>
</dbReference>
<dbReference type="InterPro" id="IPR009081">
    <property type="entry name" value="PP-bd_ACP"/>
</dbReference>
<dbReference type="InterPro" id="IPR006162">
    <property type="entry name" value="Ppantetheine_attach_site"/>
</dbReference>
<dbReference type="NCBIfam" id="TIGR00517">
    <property type="entry name" value="acyl_carrier"/>
    <property type="match status" value="1"/>
</dbReference>
<dbReference type="NCBIfam" id="NF002148">
    <property type="entry name" value="PRK00982.1-2"/>
    <property type="match status" value="1"/>
</dbReference>
<dbReference type="NCBIfam" id="NF002149">
    <property type="entry name" value="PRK00982.1-3"/>
    <property type="match status" value="1"/>
</dbReference>
<dbReference type="NCBIfam" id="NF002150">
    <property type="entry name" value="PRK00982.1-4"/>
    <property type="match status" value="1"/>
</dbReference>
<dbReference type="NCBIfam" id="NF002151">
    <property type="entry name" value="PRK00982.1-5"/>
    <property type="match status" value="1"/>
</dbReference>
<dbReference type="PANTHER" id="PTHR20863">
    <property type="entry name" value="ACYL CARRIER PROTEIN"/>
    <property type="match status" value="1"/>
</dbReference>
<dbReference type="PANTHER" id="PTHR20863:SF76">
    <property type="entry name" value="CARRIER DOMAIN-CONTAINING PROTEIN"/>
    <property type="match status" value="1"/>
</dbReference>
<dbReference type="Pfam" id="PF00550">
    <property type="entry name" value="PP-binding"/>
    <property type="match status" value="1"/>
</dbReference>
<dbReference type="SUPFAM" id="SSF47336">
    <property type="entry name" value="ACP-like"/>
    <property type="match status" value="1"/>
</dbReference>
<dbReference type="PROSITE" id="PS50075">
    <property type="entry name" value="CARRIER"/>
    <property type="match status" value="1"/>
</dbReference>
<dbReference type="PROSITE" id="PS00012">
    <property type="entry name" value="PHOSPHOPANTETHEINE"/>
    <property type="match status" value="1"/>
</dbReference>